<proteinExistence type="evidence at protein level"/>
<accession>Q5JHP2</accession>
<protein>
    <recommendedName>
        <fullName>Replication factor C small subunit</fullName>
        <shortName>RFC small subunit</shortName>
    </recommendedName>
    <alternativeName>
        <fullName>Clamp loader small subunit</fullName>
    </alternativeName>
    <component>
        <recommendedName>
            <fullName>Pko RFC intein</fullName>
        </recommendedName>
    </component>
</protein>
<comment type="function">
    <text evidence="5">Part of the RFC clamp loader complex which loads the PCNA sliding clamp onto DNA.</text>
</comment>
<comment type="subunit">
    <text evidence="1">Heteromultimer composed of small subunits (RfcS) and large subunits (RfcL).</text>
</comment>
<comment type="PTM">
    <text evidence="4">This protein undergoes a protein self splicing that involves a post-translational excision of the intervening region (intein) followed by peptide ligation.</text>
</comment>
<comment type="miscellaneous">
    <text>The intein interrupts the potential ATP-binding site.</text>
</comment>
<comment type="similarity">
    <text evidence="4">Belongs to the activator 1 small subunits family. RfcS subfamily.</text>
</comment>
<sequence>MSEEVKEVKILEKPWVEKYRPQRLEDIVGQDHIVKRLKHYVKTGSMPHLLFAGPPGVGKCLTGDAKVIANGRLFELGELVEKVSKGRFGPTPVEGLKVLGIDEDGKLREFEVQYVYKDRAERLIKVRTRLGRELKVTPYHPLLVNRKNGEIMWVKAEELRPGDRLAVPRFLPAIAEEDPLAEWLGYFIGDGHADSKNKVITFTNTDPSLRQRFMELTERLFPDAKIRERIHKNRAPDVYVNSRRAWELVSSLGLAGRKADKVYIPEKGWEGIRSFLRAYFDCDAGVDKNAVVLATASREMAEQVTYALAGFGITSKIREKKVRGKTYYHVTISGSENLERFLSEIGFSHREKLERTLKLVKKPNPNLDSLNVNYELISYVRDRLKLNFSDDKRSWSHRKARKISWELMKEIYYRLDELERLKESLSRSILIDWNEMAERRKEIAEKTGIRADRLLEYIKGKRKPSLRNYIKIAKALGIDLEPTINAMRVFARKYSSYAEIGRKLGTWNSSVRIILESNTEKIKELEEIRKIELELIGEILSDEKLKEGVAYLIFLSQNELYWDEITEVKELKGDFVIYDLHVPGYHNFIAGNMPTVVHNTTAALALARELFGENWRHNFLELNASDERGINVIREKVKEFARTKPIGGASFKIIFLDEADALTQDAQQALRRTMEMFSNNVRFILSCNYSSKIIEPIQSRCAIFRFRPLRDEDIAKRIRYIAENEGLELTEEGLQAILYVAEGDLRRAINVLQAAAALDTKITDENVFLVASRARPEDVREMMTLALEGNFLKAREKLRDILLRQGLSGEDVLIQMHKEVFNLPIPEDKKVALADKIGEYNFRLVEGANEMIQLEALLAQFTIMGK</sequence>
<evidence type="ECO:0000250" key="1"/>
<evidence type="ECO:0000255" key="2"/>
<evidence type="ECO:0000255" key="3">
    <source>
        <dbReference type="PROSITE-ProRule" id="PRU00273"/>
    </source>
</evidence>
<evidence type="ECO:0000305" key="4"/>
<evidence type="ECO:0000305" key="5">
    <source>
    </source>
</evidence>
<gene>
    <name type="primary">rfcS</name>
    <name type="ordered locus">TK2218</name>
</gene>
<feature type="chain" id="PRO_0000030382" description="Replication factor C small subunit, 1st part" evidence="2">
    <location>
        <begin position="1"/>
        <end position="59"/>
    </location>
</feature>
<feature type="chain" id="PRO_0000030383" description="Pko RFC intein" evidence="2">
    <location>
        <begin position="60"/>
        <end position="599"/>
    </location>
</feature>
<feature type="chain" id="PRO_0000030384" description="Replication factor C small subunit, 2nd part" evidence="2">
    <location>
        <begin position="600"/>
        <end position="866"/>
    </location>
</feature>
<feature type="domain" description="DOD-type homing endonuclease" evidence="3">
    <location>
        <begin position="183"/>
        <end position="313"/>
    </location>
</feature>
<name>RFCS_THEKO</name>
<reference key="1">
    <citation type="journal article" date="2005" name="Genome Res.">
        <title>Complete genome sequence of the hyperthermophilic archaeon Thermococcus kodakaraensis KOD1 and comparison with Pyrococcus genomes.</title>
        <authorList>
            <person name="Fukui T."/>
            <person name="Atomi H."/>
            <person name="Kanai T."/>
            <person name="Matsumi R."/>
            <person name="Fujiwara S."/>
            <person name="Imanaka T."/>
        </authorList>
    </citation>
    <scope>NUCLEOTIDE SEQUENCE [LARGE SCALE GENOMIC DNA]</scope>
    <source>
        <strain>ATCC BAA-918 / JCM 12380 / KOD1</strain>
    </source>
</reference>
<reference key="2">
    <citation type="journal article" date="2003" name="Biosci. Biotechnol. Biochem.">
        <title>Gene cloning and function analysis of replication factor C from Thermococcus kodakaraensis KOD1.</title>
        <authorList>
            <person name="Kitabayashi M."/>
            <person name="Nishiya Y."/>
            <person name="Esaka M."/>
            <person name="Itakura M."/>
            <person name="Imanaka T."/>
        </authorList>
    </citation>
    <scope>PROTEIN SEQUENCE OF 1-6</scope>
    <scope>FUNCTION</scope>
    <source>
        <strain>ATCC BAA-918 / JCM 12380 / KOD1</strain>
    </source>
</reference>
<keyword id="KW-0067">ATP-binding</keyword>
<keyword id="KW-0068">Autocatalytic cleavage</keyword>
<keyword id="KW-0903">Direct protein sequencing</keyword>
<keyword id="KW-0235">DNA replication</keyword>
<keyword id="KW-0547">Nucleotide-binding</keyword>
<keyword id="KW-0651">Protein splicing</keyword>
<keyword id="KW-1185">Reference proteome</keyword>
<organism>
    <name type="scientific">Thermococcus kodakarensis (strain ATCC BAA-918 / JCM 12380 / KOD1)</name>
    <name type="common">Pyrococcus kodakaraensis (strain KOD1)</name>
    <dbReference type="NCBI Taxonomy" id="69014"/>
    <lineage>
        <taxon>Archaea</taxon>
        <taxon>Methanobacteriati</taxon>
        <taxon>Methanobacteriota</taxon>
        <taxon>Thermococci</taxon>
        <taxon>Thermococcales</taxon>
        <taxon>Thermococcaceae</taxon>
        <taxon>Thermococcus</taxon>
    </lineage>
</organism>
<dbReference type="EMBL" id="AP006878">
    <property type="protein sequence ID" value="BAD86407.1"/>
    <property type="molecule type" value="Genomic_DNA"/>
</dbReference>
<dbReference type="RefSeq" id="WP_011251168.1">
    <property type="nucleotide sequence ID" value="NC_006624.1"/>
</dbReference>
<dbReference type="SMR" id="Q5JHP2"/>
<dbReference type="FunCoup" id="Q5JHP2">
    <property type="interactions" value="14"/>
</dbReference>
<dbReference type="STRING" id="69014.TK2218"/>
<dbReference type="EnsemblBacteria" id="BAD86407">
    <property type="protein sequence ID" value="BAD86407"/>
    <property type="gene ID" value="TK2218"/>
</dbReference>
<dbReference type="GeneID" id="78448758"/>
<dbReference type="KEGG" id="tko:TK2218"/>
<dbReference type="PATRIC" id="fig|69014.16.peg.2174"/>
<dbReference type="eggNOG" id="arCOG00469">
    <property type="taxonomic scope" value="Archaea"/>
</dbReference>
<dbReference type="eggNOG" id="arCOG03154">
    <property type="taxonomic scope" value="Archaea"/>
</dbReference>
<dbReference type="HOGENOM" id="CLU_015698_0_0_2"/>
<dbReference type="InParanoid" id="Q5JHP2"/>
<dbReference type="OrthoDB" id="7928at2157"/>
<dbReference type="PhylomeDB" id="Q5JHP2"/>
<dbReference type="Proteomes" id="UP000000536">
    <property type="component" value="Chromosome"/>
</dbReference>
<dbReference type="GO" id="GO:0005663">
    <property type="term" value="C:DNA replication factor C complex"/>
    <property type="evidence" value="ECO:0000318"/>
    <property type="project" value="GO_Central"/>
</dbReference>
<dbReference type="GO" id="GO:0005524">
    <property type="term" value="F:ATP binding"/>
    <property type="evidence" value="ECO:0007669"/>
    <property type="project" value="UniProtKB-KW"/>
</dbReference>
<dbReference type="GO" id="GO:0016887">
    <property type="term" value="F:ATP hydrolysis activity"/>
    <property type="evidence" value="ECO:0007669"/>
    <property type="project" value="InterPro"/>
</dbReference>
<dbReference type="GO" id="GO:0003677">
    <property type="term" value="F:DNA binding"/>
    <property type="evidence" value="ECO:0007669"/>
    <property type="project" value="InterPro"/>
</dbReference>
<dbReference type="GO" id="GO:0004519">
    <property type="term" value="F:endonuclease activity"/>
    <property type="evidence" value="ECO:0007669"/>
    <property type="project" value="InterPro"/>
</dbReference>
<dbReference type="GO" id="GO:0006281">
    <property type="term" value="P:DNA repair"/>
    <property type="evidence" value="ECO:0000318"/>
    <property type="project" value="GO_Central"/>
</dbReference>
<dbReference type="GO" id="GO:0006261">
    <property type="term" value="P:DNA-templated DNA replication"/>
    <property type="evidence" value="ECO:0000318"/>
    <property type="project" value="GO_Central"/>
</dbReference>
<dbReference type="GO" id="GO:0016539">
    <property type="term" value="P:intein-mediated protein splicing"/>
    <property type="evidence" value="ECO:0007669"/>
    <property type="project" value="InterPro"/>
</dbReference>
<dbReference type="CDD" id="cd00009">
    <property type="entry name" value="AAA"/>
    <property type="match status" value="1"/>
</dbReference>
<dbReference type="CDD" id="cd00081">
    <property type="entry name" value="Hint"/>
    <property type="match status" value="1"/>
</dbReference>
<dbReference type="CDD" id="cd18140">
    <property type="entry name" value="HLD_clamp_RFC"/>
    <property type="match status" value="1"/>
</dbReference>
<dbReference type="CDD" id="cd00093">
    <property type="entry name" value="HTH_XRE"/>
    <property type="match status" value="1"/>
</dbReference>
<dbReference type="FunFam" id="1.20.272.10:FF:000029">
    <property type="entry name" value="Replication factor C small subunit"/>
    <property type="match status" value="1"/>
</dbReference>
<dbReference type="FunFam" id="2.170.16.10:FF:000012">
    <property type="entry name" value="Replication factor C small subunit"/>
    <property type="match status" value="1"/>
</dbReference>
<dbReference type="FunFam" id="2.170.16.10:FF:000021">
    <property type="entry name" value="Replication factor C small subunit"/>
    <property type="match status" value="1"/>
</dbReference>
<dbReference type="FunFam" id="3.40.50.300:FF:003150">
    <property type="entry name" value="Replication factor C small subunit"/>
    <property type="match status" value="1"/>
</dbReference>
<dbReference type="FunFam" id="1.10.8.60:FF:000012">
    <property type="entry name" value="Replication factor C subunit 4"/>
    <property type="match status" value="1"/>
</dbReference>
<dbReference type="Gene3D" id="1.10.8.60">
    <property type="match status" value="1"/>
</dbReference>
<dbReference type="Gene3D" id="1.20.272.10">
    <property type="match status" value="1"/>
</dbReference>
<dbReference type="Gene3D" id="2.170.16.10">
    <property type="entry name" value="Hedgehog/Intein (Hint) domain"/>
    <property type="match status" value="2"/>
</dbReference>
<dbReference type="Gene3D" id="3.10.28.10">
    <property type="entry name" value="Homing endonucleases"/>
    <property type="match status" value="1"/>
</dbReference>
<dbReference type="Gene3D" id="1.10.260.40">
    <property type="entry name" value="lambda repressor-like DNA-binding domains"/>
    <property type="match status" value="1"/>
</dbReference>
<dbReference type="Gene3D" id="3.40.50.300">
    <property type="entry name" value="P-loop containing nucleotide triphosphate hydrolases"/>
    <property type="match status" value="2"/>
</dbReference>
<dbReference type="InterPro" id="IPR003959">
    <property type="entry name" value="ATPase_AAA_core"/>
</dbReference>
<dbReference type="InterPro" id="IPR001387">
    <property type="entry name" value="Cro/C1-type_HTH"/>
</dbReference>
<dbReference type="InterPro" id="IPR008921">
    <property type="entry name" value="DNA_pol3_clamp-load_cplx_C"/>
</dbReference>
<dbReference type="InterPro" id="IPR050238">
    <property type="entry name" value="DNA_Rep/Repair_Clamp_Loader"/>
</dbReference>
<dbReference type="InterPro" id="IPR003586">
    <property type="entry name" value="Hint_dom_C"/>
</dbReference>
<dbReference type="InterPro" id="IPR003587">
    <property type="entry name" value="Hint_dom_N"/>
</dbReference>
<dbReference type="InterPro" id="IPR036844">
    <property type="entry name" value="Hint_dom_sf"/>
</dbReference>
<dbReference type="InterPro" id="IPR027434">
    <property type="entry name" value="Homing_endonucl"/>
</dbReference>
<dbReference type="InterPro" id="IPR006142">
    <property type="entry name" value="INTEIN"/>
</dbReference>
<dbReference type="InterPro" id="IPR030934">
    <property type="entry name" value="Intein_C"/>
</dbReference>
<dbReference type="InterPro" id="IPR004042">
    <property type="entry name" value="Intein_endonuc_central"/>
</dbReference>
<dbReference type="InterPro" id="IPR006141">
    <property type="entry name" value="Intein_N"/>
</dbReference>
<dbReference type="InterPro" id="IPR004860">
    <property type="entry name" value="LAGLIDADG_dom"/>
</dbReference>
<dbReference type="InterPro" id="IPR010982">
    <property type="entry name" value="Lambda_DNA-bd_dom_sf"/>
</dbReference>
<dbReference type="InterPro" id="IPR027417">
    <property type="entry name" value="P-loop_NTPase"/>
</dbReference>
<dbReference type="InterPro" id="IPR013748">
    <property type="entry name" value="Rep_factorC_C"/>
</dbReference>
<dbReference type="InterPro" id="IPR047854">
    <property type="entry name" value="RFC_lid"/>
</dbReference>
<dbReference type="NCBIfam" id="TIGR01443">
    <property type="entry name" value="intein_Cterm"/>
    <property type="match status" value="1"/>
</dbReference>
<dbReference type="NCBIfam" id="TIGR01445">
    <property type="entry name" value="intein_Nterm"/>
    <property type="match status" value="1"/>
</dbReference>
<dbReference type="NCBIfam" id="NF001679">
    <property type="entry name" value="PRK00440.1"/>
    <property type="match status" value="1"/>
</dbReference>
<dbReference type="NCBIfam" id="NF003157">
    <property type="entry name" value="PRK04132.1-2"/>
    <property type="match status" value="1"/>
</dbReference>
<dbReference type="NCBIfam" id="NF003159">
    <property type="entry name" value="PRK04132.1-4"/>
    <property type="match status" value="1"/>
</dbReference>
<dbReference type="PANTHER" id="PTHR11669">
    <property type="entry name" value="REPLICATION FACTOR C / DNA POLYMERASE III GAMMA-TAU SUBUNIT"/>
    <property type="match status" value="1"/>
</dbReference>
<dbReference type="PANTHER" id="PTHR11669:SF20">
    <property type="entry name" value="REPLICATION FACTOR C SUBUNIT 4"/>
    <property type="match status" value="1"/>
</dbReference>
<dbReference type="Pfam" id="PF00004">
    <property type="entry name" value="AAA"/>
    <property type="match status" value="1"/>
</dbReference>
<dbReference type="Pfam" id="PF01381">
    <property type="entry name" value="HTH_3"/>
    <property type="match status" value="1"/>
</dbReference>
<dbReference type="Pfam" id="PF14890">
    <property type="entry name" value="Intein_splicing"/>
    <property type="match status" value="1"/>
</dbReference>
<dbReference type="Pfam" id="PF14528">
    <property type="entry name" value="LAGLIDADG_3"/>
    <property type="match status" value="2"/>
</dbReference>
<dbReference type="Pfam" id="PF08542">
    <property type="entry name" value="Rep_fac_C"/>
    <property type="match status" value="1"/>
</dbReference>
<dbReference type="PRINTS" id="PR00379">
    <property type="entry name" value="INTEIN"/>
</dbReference>
<dbReference type="SMART" id="SM00305">
    <property type="entry name" value="HintC"/>
    <property type="match status" value="1"/>
</dbReference>
<dbReference type="SMART" id="SM00306">
    <property type="entry name" value="HintN"/>
    <property type="match status" value="1"/>
</dbReference>
<dbReference type="SMART" id="SM00530">
    <property type="entry name" value="HTH_XRE"/>
    <property type="match status" value="1"/>
</dbReference>
<dbReference type="SUPFAM" id="SSF51294">
    <property type="entry name" value="Hedgehog/intein (Hint) domain"/>
    <property type="match status" value="1"/>
</dbReference>
<dbReference type="SUPFAM" id="SSF55608">
    <property type="entry name" value="Homing endonucleases"/>
    <property type="match status" value="1"/>
</dbReference>
<dbReference type="SUPFAM" id="SSF47413">
    <property type="entry name" value="lambda repressor-like DNA-binding domains"/>
    <property type="match status" value="1"/>
</dbReference>
<dbReference type="SUPFAM" id="SSF52540">
    <property type="entry name" value="P-loop containing nucleoside triphosphate hydrolases"/>
    <property type="match status" value="2"/>
</dbReference>
<dbReference type="SUPFAM" id="SSF48019">
    <property type="entry name" value="post-AAA+ oligomerization domain-like"/>
    <property type="match status" value="1"/>
</dbReference>
<dbReference type="PROSITE" id="PS50818">
    <property type="entry name" value="INTEIN_C_TER"/>
    <property type="match status" value="1"/>
</dbReference>
<dbReference type="PROSITE" id="PS50819">
    <property type="entry name" value="INTEIN_ENDONUCLEASE"/>
    <property type="match status" value="1"/>
</dbReference>
<dbReference type="PROSITE" id="PS50817">
    <property type="entry name" value="INTEIN_N_TER"/>
    <property type="match status" value="1"/>
</dbReference>